<proteinExistence type="inferred from homology"/>
<gene>
    <name type="ordered locus">At3g53170</name>
    <name type="ORF">T4D2.100</name>
</gene>
<comment type="similarity">
    <text evidence="1">Belongs to the PPR family. P subfamily.</text>
</comment>
<comment type="sequence caution" evidence="1">
    <conflict type="erroneous gene model prediction">
        <sequence resource="EMBL-CDS" id="AEE79044"/>
    </conflict>
</comment>
<comment type="sequence caution" evidence="1">
    <conflict type="erroneous initiation">
        <sequence resource="EMBL-CDS" id="AEE79044"/>
    </conflict>
    <text>Extended N-terminus.</text>
</comment>
<comment type="online information" name="Pentatricopeptide repeat proteins">
    <link uri="https://ppr.plantenergy.uwa.edu.au"/>
</comment>
<reference key="1">
    <citation type="journal article" date="2000" name="Nature">
        <title>Sequence and analysis of chromosome 3 of the plant Arabidopsis thaliana.</title>
        <authorList>
            <person name="Salanoubat M."/>
            <person name="Lemcke K."/>
            <person name="Rieger M."/>
            <person name="Ansorge W."/>
            <person name="Unseld M."/>
            <person name="Fartmann B."/>
            <person name="Valle G."/>
            <person name="Bloecker H."/>
            <person name="Perez-Alonso M."/>
            <person name="Obermaier B."/>
            <person name="Delseny M."/>
            <person name="Boutry M."/>
            <person name="Grivell L.A."/>
            <person name="Mache R."/>
            <person name="Puigdomenech P."/>
            <person name="De Simone V."/>
            <person name="Choisne N."/>
            <person name="Artiguenave F."/>
            <person name="Robert C."/>
            <person name="Brottier P."/>
            <person name="Wincker P."/>
            <person name="Cattolico L."/>
            <person name="Weissenbach J."/>
            <person name="Saurin W."/>
            <person name="Quetier F."/>
            <person name="Schaefer M."/>
            <person name="Mueller-Auer S."/>
            <person name="Gabel C."/>
            <person name="Fuchs M."/>
            <person name="Benes V."/>
            <person name="Wurmbach E."/>
            <person name="Drzonek H."/>
            <person name="Erfle H."/>
            <person name="Jordan N."/>
            <person name="Bangert S."/>
            <person name="Wiedelmann R."/>
            <person name="Kranz H."/>
            <person name="Voss H."/>
            <person name="Holland R."/>
            <person name="Brandt P."/>
            <person name="Nyakatura G."/>
            <person name="Vezzi A."/>
            <person name="D'Angelo M."/>
            <person name="Pallavicini A."/>
            <person name="Toppo S."/>
            <person name="Simionati B."/>
            <person name="Conrad A."/>
            <person name="Hornischer K."/>
            <person name="Kauer G."/>
            <person name="Loehnert T.-H."/>
            <person name="Nordsiek G."/>
            <person name="Reichelt J."/>
            <person name="Scharfe M."/>
            <person name="Schoen O."/>
            <person name="Bargues M."/>
            <person name="Terol J."/>
            <person name="Climent J."/>
            <person name="Navarro P."/>
            <person name="Collado C."/>
            <person name="Perez-Perez A."/>
            <person name="Ottenwaelder B."/>
            <person name="Duchemin D."/>
            <person name="Cooke R."/>
            <person name="Laudie M."/>
            <person name="Berger-Llauro C."/>
            <person name="Purnelle B."/>
            <person name="Masuy D."/>
            <person name="de Haan M."/>
            <person name="Maarse A.C."/>
            <person name="Alcaraz J.-P."/>
            <person name="Cottet A."/>
            <person name="Casacuberta E."/>
            <person name="Monfort A."/>
            <person name="Argiriou A."/>
            <person name="Flores M."/>
            <person name="Liguori R."/>
            <person name="Vitale D."/>
            <person name="Mannhaupt G."/>
            <person name="Haase D."/>
            <person name="Schoof H."/>
            <person name="Rudd S."/>
            <person name="Zaccaria P."/>
            <person name="Mewes H.-W."/>
            <person name="Mayer K.F.X."/>
            <person name="Kaul S."/>
            <person name="Town C.D."/>
            <person name="Koo H.L."/>
            <person name="Tallon L.J."/>
            <person name="Jenkins J."/>
            <person name="Rooney T."/>
            <person name="Rizzo M."/>
            <person name="Walts A."/>
            <person name="Utterback T."/>
            <person name="Fujii C.Y."/>
            <person name="Shea T.P."/>
            <person name="Creasy T.H."/>
            <person name="Haas B."/>
            <person name="Maiti R."/>
            <person name="Wu D."/>
            <person name="Peterson J."/>
            <person name="Van Aken S."/>
            <person name="Pai G."/>
            <person name="Militscher J."/>
            <person name="Sellers P."/>
            <person name="Gill J.E."/>
            <person name="Feldblyum T.V."/>
            <person name="Preuss D."/>
            <person name="Lin X."/>
            <person name="Nierman W.C."/>
            <person name="Salzberg S.L."/>
            <person name="White O."/>
            <person name="Venter J.C."/>
            <person name="Fraser C.M."/>
            <person name="Kaneko T."/>
            <person name="Nakamura Y."/>
            <person name="Sato S."/>
            <person name="Kato T."/>
            <person name="Asamizu E."/>
            <person name="Sasamoto S."/>
            <person name="Kimura T."/>
            <person name="Idesawa K."/>
            <person name="Kawashima K."/>
            <person name="Kishida Y."/>
            <person name="Kiyokawa C."/>
            <person name="Kohara M."/>
            <person name="Matsumoto M."/>
            <person name="Matsuno A."/>
            <person name="Muraki A."/>
            <person name="Nakayama S."/>
            <person name="Nakazaki N."/>
            <person name="Shinpo S."/>
            <person name="Takeuchi C."/>
            <person name="Wada T."/>
            <person name="Watanabe A."/>
            <person name="Yamada M."/>
            <person name="Yasuda M."/>
            <person name="Tabata S."/>
        </authorList>
    </citation>
    <scope>NUCLEOTIDE SEQUENCE [LARGE SCALE GENOMIC DNA]</scope>
    <source>
        <strain>cv. Columbia</strain>
    </source>
</reference>
<reference key="2">
    <citation type="journal article" date="2017" name="Plant J.">
        <title>Araport11: a complete reannotation of the Arabidopsis thaliana reference genome.</title>
        <authorList>
            <person name="Cheng C.Y."/>
            <person name="Krishnakumar V."/>
            <person name="Chan A.P."/>
            <person name="Thibaud-Nissen F."/>
            <person name="Schobel S."/>
            <person name="Town C.D."/>
        </authorList>
    </citation>
    <scope>GENOME REANNOTATION</scope>
    <source>
        <strain>cv. Columbia</strain>
    </source>
</reference>
<reference key="3">
    <citation type="journal article" date="2004" name="Plant Cell">
        <title>Genome-wide analysis of Arabidopsis pentatricopeptide repeat proteins reveals their essential role in organelle biogenesis.</title>
        <authorList>
            <person name="Lurin C."/>
            <person name="Andres C."/>
            <person name="Aubourg S."/>
            <person name="Bellaoui M."/>
            <person name="Bitton F."/>
            <person name="Bruyere C."/>
            <person name="Caboche M."/>
            <person name="Debast C."/>
            <person name="Gualberto J."/>
            <person name="Hoffmann B."/>
            <person name="Lecharny A."/>
            <person name="Le Ret M."/>
            <person name="Martin-Magniette M.-L."/>
            <person name="Mireau H."/>
            <person name="Peeters N."/>
            <person name="Renou J.-P."/>
            <person name="Szurek B."/>
            <person name="Taconnat L."/>
            <person name="Small I."/>
        </authorList>
    </citation>
    <scope>GENE FAMILY</scope>
</reference>
<feature type="chain" id="PRO_0000356138" description="Pentatricopeptide repeat-containing protein At3g53170">
    <location>
        <begin position="1"/>
        <end position="447"/>
    </location>
</feature>
<feature type="repeat" description="PPR 1">
    <location>
        <begin position="93"/>
        <end position="127"/>
    </location>
</feature>
<feature type="repeat" description="PPR 2">
    <location>
        <begin position="128"/>
        <end position="158"/>
    </location>
</feature>
<feature type="repeat" description="PPR 3">
    <location>
        <begin position="164"/>
        <end position="198"/>
    </location>
</feature>
<feature type="repeat" description="PPR 4">
    <location>
        <begin position="199"/>
        <end position="233"/>
    </location>
</feature>
<feature type="repeat" description="PPR 5">
    <location>
        <begin position="235"/>
        <end position="269"/>
    </location>
</feature>
<feature type="repeat" description="PPR 6">
    <location>
        <begin position="270"/>
        <end position="304"/>
    </location>
</feature>
<feature type="repeat" description="PPR 7">
    <location>
        <begin position="305"/>
        <end position="339"/>
    </location>
</feature>
<feature type="repeat" description="PPR 8">
    <location>
        <begin position="340"/>
        <end position="374"/>
    </location>
</feature>
<feature type="repeat" description="PPR 9">
    <location>
        <begin position="375"/>
        <end position="409"/>
    </location>
</feature>
<feature type="repeat" description="PPR 10">
    <location>
        <begin position="410"/>
        <end position="444"/>
    </location>
</feature>
<evidence type="ECO:0000305" key="1"/>
<dbReference type="EMBL" id="AL132958">
    <property type="protein sequence ID" value="CAB64220.1"/>
    <property type="molecule type" value="Genomic_DNA"/>
</dbReference>
<dbReference type="EMBL" id="CP002686">
    <property type="protein sequence ID" value="AEE79044.1"/>
    <property type="status" value="ALT_SEQ"/>
    <property type="molecule type" value="Genomic_DNA"/>
</dbReference>
<dbReference type="EMBL" id="CP002686">
    <property type="protein sequence ID" value="ANM64287.1"/>
    <property type="molecule type" value="Genomic_DNA"/>
</dbReference>
<dbReference type="PIR" id="T46163">
    <property type="entry name" value="T46163"/>
</dbReference>
<dbReference type="RefSeq" id="NP_001319735.1">
    <property type="nucleotide sequence ID" value="NM_001339595.1"/>
</dbReference>
<dbReference type="RefSeq" id="NP_001326325.1">
    <property type="nucleotide sequence ID" value="NM_001339596.1"/>
</dbReference>
<dbReference type="RefSeq" id="NP_001326327.1">
    <property type="nucleotide sequence ID" value="NM_001339598.1"/>
</dbReference>
<dbReference type="SMR" id="Q9SCP4"/>
<dbReference type="FunCoup" id="Q9SCP4">
    <property type="interactions" value="277"/>
</dbReference>
<dbReference type="STRING" id="3702.Q9SCP4"/>
<dbReference type="PaxDb" id="3702-AT3G53170.1"/>
<dbReference type="EnsemblPlants" id="AT3G53170.4">
    <property type="protein sequence ID" value="AT3G53170.4"/>
    <property type="gene ID" value="AT3G53170"/>
</dbReference>
<dbReference type="GeneID" id="824483"/>
<dbReference type="Gramene" id="AT3G53170.4">
    <property type="protein sequence ID" value="AT3G53170.4"/>
    <property type="gene ID" value="AT3G53170"/>
</dbReference>
<dbReference type="KEGG" id="ath:AT3G53170"/>
<dbReference type="Araport" id="AT3G53170"/>
<dbReference type="TAIR" id="AT3G53170"/>
<dbReference type="eggNOG" id="KOG4197">
    <property type="taxonomic scope" value="Eukaryota"/>
</dbReference>
<dbReference type="HOGENOM" id="CLU_002706_49_6_1"/>
<dbReference type="InParanoid" id="Q9SCP4"/>
<dbReference type="OMA" id="QCNAVIH"/>
<dbReference type="PhylomeDB" id="Q9SCP4"/>
<dbReference type="CD-CODE" id="4299E36E">
    <property type="entry name" value="Nucleolus"/>
</dbReference>
<dbReference type="PRO" id="PR:Q9SCP4"/>
<dbReference type="Proteomes" id="UP000006548">
    <property type="component" value="Chromosome 3"/>
</dbReference>
<dbReference type="ExpressionAtlas" id="Q9SCP4">
    <property type="expression patterns" value="baseline and differential"/>
</dbReference>
<dbReference type="GO" id="GO:0003729">
    <property type="term" value="F:mRNA binding"/>
    <property type="evidence" value="ECO:0007669"/>
    <property type="project" value="InterPro"/>
</dbReference>
<dbReference type="Gene3D" id="1.25.40.10">
    <property type="entry name" value="Tetratricopeptide repeat domain"/>
    <property type="match status" value="5"/>
</dbReference>
<dbReference type="InterPro" id="IPR002885">
    <property type="entry name" value="Pentatricopeptide_rpt"/>
</dbReference>
<dbReference type="InterPro" id="IPR044179">
    <property type="entry name" value="PPR5-like"/>
</dbReference>
<dbReference type="InterPro" id="IPR011990">
    <property type="entry name" value="TPR-like_helical_dom_sf"/>
</dbReference>
<dbReference type="NCBIfam" id="TIGR00756">
    <property type="entry name" value="PPR"/>
    <property type="match status" value="9"/>
</dbReference>
<dbReference type="PANTHER" id="PTHR47874">
    <property type="entry name" value="EXPRESSED PROTEIN"/>
    <property type="match status" value="1"/>
</dbReference>
<dbReference type="PANTHER" id="PTHR47874:SF6">
    <property type="entry name" value="PENTATRICOPEPTIDE REPEAT-CONTAINING PROTEIN"/>
    <property type="match status" value="1"/>
</dbReference>
<dbReference type="Pfam" id="PF01535">
    <property type="entry name" value="PPR"/>
    <property type="match status" value="4"/>
</dbReference>
<dbReference type="Pfam" id="PF13041">
    <property type="entry name" value="PPR_2"/>
    <property type="match status" value="3"/>
</dbReference>
<dbReference type="PROSITE" id="PS51375">
    <property type="entry name" value="PPR"/>
    <property type="match status" value="10"/>
</dbReference>
<sequence>MCSTKVPNERTEKMNSGLISTRHQVDPKKELSRILRTDAAVKGIERKANSEKYLTLWPKAVLEALDEAIKENRWQSALKIFNLLRKQHWYEPRCKTYTKLFKVLGNCKQPDQASLLFEVMLSEGLKPTIDVYTSLISVYGKSELLDKAFSTLEYMKSVSDCKPDVFTFTVLISCCCKLGRFDLVKSIVLEMSYLGVGCSTVTYNTIIDGYGKAGMFEEMESVLADMIEDGDSLPDVCTLNSIIGSYGNGRNMRKMESWYSRFQLMGVQPDITTFNILILSFGKAGMYKKMCSVMDFMEKRFFSLTTVTYNIVIETFGKAGRIEKMDDVFRKMKYQGVKPNSITYCSLVNAYSKAGLVVKIDSVLRQIVNSDVVLDTPFFNCIINAYGQAGDLATMKELYIQMEERKCKPDKITFATMIKTYTAHGIFDAVQELEKQMISSGENLDIL</sequence>
<protein>
    <recommendedName>
        <fullName>Pentatricopeptide repeat-containing protein At3g53170</fullName>
    </recommendedName>
</protein>
<accession>Q9SCP4</accession>
<accession>F4J999</accession>
<keyword id="KW-1185">Reference proteome</keyword>
<keyword id="KW-0677">Repeat</keyword>
<organism>
    <name type="scientific">Arabidopsis thaliana</name>
    <name type="common">Mouse-ear cress</name>
    <dbReference type="NCBI Taxonomy" id="3702"/>
    <lineage>
        <taxon>Eukaryota</taxon>
        <taxon>Viridiplantae</taxon>
        <taxon>Streptophyta</taxon>
        <taxon>Embryophyta</taxon>
        <taxon>Tracheophyta</taxon>
        <taxon>Spermatophyta</taxon>
        <taxon>Magnoliopsida</taxon>
        <taxon>eudicotyledons</taxon>
        <taxon>Gunneridae</taxon>
        <taxon>Pentapetalae</taxon>
        <taxon>rosids</taxon>
        <taxon>malvids</taxon>
        <taxon>Brassicales</taxon>
        <taxon>Brassicaceae</taxon>
        <taxon>Camelineae</taxon>
        <taxon>Arabidopsis</taxon>
    </lineage>
</organism>
<name>PP279_ARATH</name>